<keyword id="KW-1185">Reference proteome</keyword>
<keyword id="KW-0687">Ribonucleoprotein</keyword>
<keyword id="KW-0689">Ribosomal protein</keyword>
<keyword id="KW-0694">RNA-binding</keyword>
<keyword id="KW-0699">rRNA-binding</keyword>
<keyword id="KW-0820">tRNA-binding</keyword>
<gene>
    <name evidence="1" type="primary">rpsM</name>
    <name type="ordered locus">RSal33209_2119</name>
</gene>
<reference key="1">
    <citation type="journal article" date="2008" name="J. Bacteriol.">
        <title>Genome sequence of the fish pathogen Renibacterium salmoninarum suggests reductive evolution away from an environmental Arthrobacter ancestor.</title>
        <authorList>
            <person name="Wiens G.D."/>
            <person name="Rockey D.D."/>
            <person name="Wu Z."/>
            <person name="Chang J."/>
            <person name="Levy R."/>
            <person name="Crane S."/>
            <person name="Chen D.S."/>
            <person name="Capri G.R."/>
            <person name="Burnett J.R."/>
            <person name="Sudheesh P.S."/>
            <person name="Schipma M.J."/>
            <person name="Burd H."/>
            <person name="Bhattacharyya A."/>
            <person name="Rhodes L.D."/>
            <person name="Kaul R."/>
            <person name="Strom M.S."/>
        </authorList>
    </citation>
    <scope>NUCLEOTIDE SEQUENCE [LARGE SCALE GENOMIC DNA]</scope>
    <source>
        <strain>ATCC 33209 / DSM 20767 / JCM 11484 / NBRC 15589 / NCIMB 2235</strain>
    </source>
</reference>
<organism>
    <name type="scientific">Renibacterium salmoninarum (strain ATCC 33209 / DSM 20767 / JCM 11484 / NBRC 15589 / NCIMB 2235)</name>
    <dbReference type="NCBI Taxonomy" id="288705"/>
    <lineage>
        <taxon>Bacteria</taxon>
        <taxon>Bacillati</taxon>
        <taxon>Actinomycetota</taxon>
        <taxon>Actinomycetes</taxon>
        <taxon>Micrococcales</taxon>
        <taxon>Micrococcaceae</taxon>
        <taxon>Renibacterium</taxon>
    </lineage>
</organism>
<feature type="chain" id="PRO_1000086253" description="Small ribosomal subunit protein uS13">
    <location>
        <begin position="1"/>
        <end position="125"/>
    </location>
</feature>
<feature type="region of interest" description="Disordered" evidence="2">
    <location>
        <begin position="93"/>
        <end position="125"/>
    </location>
</feature>
<proteinExistence type="inferred from homology"/>
<comment type="function">
    <text evidence="1">Located at the top of the head of the 30S subunit, it contacts several helices of the 16S rRNA. In the 70S ribosome it contacts the 23S rRNA (bridge B1a) and protein L5 of the 50S subunit (bridge B1b), connecting the 2 subunits; these bridges are implicated in subunit movement. Contacts the tRNAs in the A and P-sites.</text>
</comment>
<comment type="subunit">
    <text evidence="1">Part of the 30S ribosomal subunit. Forms a loose heterodimer with protein S19. Forms two bridges to the 50S subunit in the 70S ribosome.</text>
</comment>
<comment type="similarity">
    <text evidence="1">Belongs to the universal ribosomal protein uS13 family.</text>
</comment>
<dbReference type="EMBL" id="CP000910">
    <property type="protein sequence ID" value="ABY23851.1"/>
    <property type="molecule type" value="Genomic_DNA"/>
</dbReference>
<dbReference type="RefSeq" id="WP_012245520.1">
    <property type="nucleotide sequence ID" value="NC_010168.1"/>
</dbReference>
<dbReference type="SMR" id="A9WSR3"/>
<dbReference type="STRING" id="288705.RSal33209_2119"/>
<dbReference type="KEGG" id="rsa:RSal33209_2119"/>
<dbReference type="eggNOG" id="COG0099">
    <property type="taxonomic scope" value="Bacteria"/>
</dbReference>
<dbReference type="HOGENOM" id="CLU_103849_1_2_11"/>
<dbReference type="Proteomes" id="UP000002007">
    <property type="component" value="Chromosome"/>
</dbReference>
<dbReference type="GO" id="GO:0005829">
    <property type="term" value="C:cytosol"/>
    <property type="evidence" value="ECO:0007669"/>
    <property type="project" value="TreeGrafter"/>
</dbReference>
<dbReference type="GO" id="GO:0015935">
    <property type="term" value="C:small ribosomal subunit"/>
    <property type="evidence" value="ECO:0007669"/>
    <property type="project" value="TreeGrafter"/>
</dbReference>
<dbReference type="GO" id="GO:0019843">
    <property type="term" value="F:rRNA binding"/>
    <property type="evidence" value="ECO:0007669"/>
    <property type="project" value="UniProtKB-UniRule"/>
</dbReference>
<dbReference type="GO" id="GO:0003735">
    <property type="term" value="F:structural constituent of ribosome"/>
    <property type="evidence" value="ECO:0007669"/>
    <property type="project" value="InterPro"/>
</dbReference>
<dbReference type="GO" id="GO:0000049">
    <property type="term" value="F:tRNA binding"/>
    <property type="evidence" value="ECO:0007669"/>
    <property type="project" value="UniProtKB-UniRule"/>
</dbReference>
<dbReference type="GO" id="GO:0006412">
    <property type="term" value="P:translation"/>
    <property type="evidence" value="ECO:0007669"/>
    <property type="project" value="UniProtKB-UniRule"/>
</dbReference>
<dbReference type="FunFam" id="1.10.8.50:FF:000001">
    <property type="entry name" value="30S ribosomal protein S13"/>
    <property type="match status" value="1"/>
</dbReference>
<dbReference type="FunFam" id="4.10.910.10:FF:000001">
    <property type="entry name" value="30S ribosomal protein S13"/>
    <property type="match status" value="1"/>
</dbReference>
<dbReference type="Gene3D" id="1.10.8.50">
    <property type="match status" value="1"/>
</dbReference>
<dbReference type="Gene3D" id="4.10.910.10">
    <property type="entry name" value="30s ribosomal protein s13, domain 2"/>
    <property type="match status" value="1"/>
</dbReference>
<dbReference type="HAMAP" id="MF_01315">
    <property type="entry name" value="Ribosomal_uS13"/>
    <property type="match status" value="1"/>
</dbReference>
<dbReference type="InterPro" id="IPR027437">
    <property type="entry name" value="Rbsml_uS13_C"/>
</dbReference>
<dbReference type="InterPro" id="IPR001892">
    <property type="entry name" value="Ribosomal_uS13"/>
</dbReference>
<dbReference type="InterPro" id="IPR010979">
    <property type="entry name" value="Ribosomal_uS13-like_H2TH"/>
</dbReference>
<dbReference type="InterPro" id="IPR019980">
    <property type="entry name" value="Ribosomal_uS13_bac-type"/>
</dbReference>
<dbReference type="InterPro" id="IPR018269">
    <property type="entry name" value="Ribosomal_uS13_CS"/>
</dbReference>
<dbReference type="NCBIfam" id="TIGR03631">
    <property type="entry name" value="uS13_bact"/>
    <property type="match status" value="1"/>
</dbReference>
<dbReference type="PANTHER" id="PTHR10871">
    <property type="entry name" value="30S RIBOSOMAL PROTEIN S13/40S RIBOSOMAL PROTEIN S18"/>
    <property type="match status" value="1"/>
</dbReference>
<dbReference type="PANTHER" id="PTHR10871:SF1">
    <property type="entry name" value="SMALL RIBOSOMAL SUBUNIT PROTEIN US13M"/>
    <property type="match status" value="1"/>
</dbReference>
<dbReference type="Pfam" id="PF00416">
    <property type="entry name" value="Ribosomal_S13"/>
    <property type="match status" value="1"/>
</dbReference>
<dbReference type="PIRSF" id="PIRSF002134">
    <property type="entry name" value="Ribosomal_S13"/>
    <property type="match status" value="1"/>
</dbReference>
<dbReference type="SUPFAM" id="SSF46946">
    <property type="entry name" value="S13-like H2TH domain"/>
    <property type="match status" value="1"/>
</dbReference>
<dbReference type="PROSITE" id="PS00646">
    <property type="entry name" value="RIBOSOMAL_S13_1"/>
    <property type="match status" value="1"/>
</dbReference>
<dbReference type="PROSITE" id="PS50159">
    <property type="entry name" value="RIBOSOMAL_S13_2"/>
    <property type="match status" value="1"/>
</dbReference>
<accession>A9WSR3</accession>
<protein>
    <recommendedName>
        <fullName evidence="1">Small ribosomal subunit protein uS13</fullName>
    </recommendedName>
    <alternativeName>
        <fullName evidence="3">30S ribosomal protein S13</fullName>
    </alternativeName>
</protein>
<evidence type="ECO:0000255" key="1">
    <source>
        <dbReference type="HAMAP-Rule" id="MF_01315"/>
    </source>
</evidence>
<evidence type="ECO:0000256" key="2">
    <source>
        <dbReference type="SAM" id="MobiDB-lite"/>
    </source>
</evidence>
<evidence type="ECO:0000305" key="3"/>
<sequence>MARLAGVDLPREKRLEVALTYIYGVGKTRAHKTLAETGISPDVRVKDLSDAELVQLRDYIEVNYKVEGDLRREVAADIRRKVEIGSYEGIRHRRGLPVRGQRTKTNARTRKGPKRTVAGKKKAGR</sequence>
<name>RS13_RENSM</name>